<proteinExistence type="inferred from homology"/>
<accession>Q9ZCF7</accession>
<feature type="chain" id="PRO_0000117533" description="NADH-quinone oxidoreductase subunit H">
    <location>
        <begin position="1"/>
        <end position="339"/>
    </location>
</feature>
<feature type="transmembrane region" description="Helical" evidence="1">
    <location>
        <begin position="10"/>
        <end position="30"/>
    </location>
</feature>
<feature type="transmembrane region" description="Helical" evidence="1">
    <location>
        <begin position="50"/>
        <end position="70"/>
    </location>
</feature>
<feature type="transmembrane region" description="Helical" evidence="1">
    <location>
        <begin position="82"/>
        <end position="102"/>
    </location>
</feature>
<feature type="transmembrane region" description="Helical" evidence="1">
    <location>
        <begin position="115"/>
        <end position="135"/>
    </location>
</feature>
<feature type="transmembrane region" description="Helical" evidence="1">
    <location>
        <begin position="161"/>
        <end position="181"/>
    </location>
</feature>
<feature type="transmembrane region" description="Helical" evidence="1">
    <location>
        <begin position="187"/>
        <end position="207"/>
    </location>
</feature>
<feature type="transmembrane region" description="Helical" evidence="1">
    <location>
        <begin position="235"/>
        <end position="255"/>
    </location>
</feature>
<feature type="transmembrane region" description="Helical" evidence="1">
    <location>
        <begin position="275"/>
        <end position="295"/>
    </location>
</feature>
<feature type="transmembrane region" description="Helical" evidence="1">
    <location>
        <begin position="311"/>
        <end position="331"/>
    </location>
</feature>
<keyword id="KW-0997">Cell inner membrane</keyword>
<keyword id="KW-1003">Cell membrane</keyword>
<keyword id="KW-0472">Membrane</keyword>
<keyword id="KW-0520">NAD</keyword>
<keyword id="KW-0874">Quinone</keyword>
<keyword id="KW-1185">Reference proteome</keyword>
<keyword id="KW-1278">Translocase</keyword>
<keyword id="KW-0812">Transmembrane</keyword>
<keyword id="KW-1133">Transmembrane helix</keyword>
<keyword id="KW-0830">Ubiquinone</keyword>
<protein>
    <recommendedName>
        <fullName evidence="1">NADH-quinone oxidoreductase subunit H</fullName>
        <ecNumber evidence="1">7.1.1.-</ecNumber>
    </recommendedName>
    <alternativeName>
        <fullName evidence="1">NADH dehydrogenase I subunit H</fullName>
    </alternativeName>
    <alternativeName>
        <fullName evidence="1">NDH-1 subunit H</fullName>
    </alternativeName>
</protein>
<dbReference type="EC" id="7.1.1.-" evidence="1"/>
<dbReference type="EMBL" id="AJ235273">
    <property type="protein sequence ID" value="CAA15222.1"/>
    <property type="molecule type" value="Genomic_DNA"/>
</dbReference>
<dbReference type="PIR" id="F71640">
    <property type="entry name" value="F71640"/>
</dbReference>
<dbReference type="RefSeq" id="NP_221146.1">
    <property type="nucleotide sequence ID" value="NC_000963.1"/>
</dbReference>
<dbReference type="RefSeq" id="WP_010886375.1">
    <property type="nucleotide sequence ID" value="NC_000963.1"/>
</dbReference>
<dbReference type="SMR" id="Q9ZCF7"/>
<dbReference type="STRING" id="272947.gene:17555865"/>
<dbReference type="EnsemblBacteria" id="CAA15222">
    <property type="protein sequence ID" value="CAA15222"/>
    <property type="gene ID" value="CAA15222"/>
</dbReference>
<dbReference type="GeneID" id="57569918"/>
<dbReference type="KEGG" id="rpr:RP796"/>
<dbReference type="PATRIC" id="fig|272947.5.peg.832"/>
<dbReference type="eggNOG" id="COG1005">
    <property type="taxonomic scope" value="Bacteria"/>
</dbReference>
<dbReference type="HOGENOM" id="CLU_015134_0_1_5"/>
<dbReference type="OrthoDB" id="9803734at2"/>
<dbReference type="Proteomes" id="UP000002480">
    <property type="component" value="Chromosome"/>
</dbReference>
<dbReference type="GO" id="GO:0005886">
    <property type="term" value="C:plasma membrane"/>
    <property type="evidence" value="ECO:0007669"/>
    <property type="project" value="UniProtKB-SubCell"/>
</dbReference>
<dbReference type="GO" id="GO:0003954">
    <property type="term" value="F:NADH dehydrogenase activity"/>
    <property type="evidence" value="ECO:0007669"/>
    <property type="project" value="TreeGrafter"/>
</dbReference>
<dbReference type="GO" id="GO:0016655">
    <property type="term" value="F:oxidoreductase activity, acting on NAD(P)H, quinone or similar compound as acceptor"/>
    <property type="evidence" value="ECO:0007669"/>
    <property type="project" value="UniProtKB-UniRule"/>
</dbReference>
<dbReference type="GO" id="GO:0048038">
    <property type="term" value="F:quinone binding"/>
    <property type="evidence" value="ECO:0007669"/>
    <property type="project" value="UniProtKB-KW"/>
</dbReference>
<dbReference type="GO" id="GO:0009060">
    <property type="term" value="P:aerobic respiration"/>
    <property type="evidence" value="ECO:0007669"/>
    <property type="project" value="TreeGrafter"/>
</dbReference>
<dbReference type="HAMAP" id="MF_01350">
    <property type="entry name" value="NDH1_NuoH"/>
    <property type="match status" value="1"/>
</dbReference>
<dbReference type="InterPro" id="IPR001694">
    <property type="entry name" value="NADH_UbQ_OxRdtase_su1/FPO"/>
</dbReference>
<dbReference type="InterPro" id="IPR018086">
    <property type="entry name" value="NADH_UbQ_OxRdtase_su1_CS"/>
</dbReference>
<dbReference type="NCBIfam" id="NF004741">
    <property type="entry name" value="PRK06076.1-2"/>
    <property type="match status" value="1"/>
</dbReference>
<dbReference type="NCBIfam" id="NF004745">
    <property type="entry name" value="PRK06076.1-6"/>
    <property type="match status" value="1"/>
</dbReference>
<dbReference type="PANTHER" id="PTHR11432">
    <property type="entry name" value="NADH DEHYDROGENASE SUBUNIT 1"/>
    <property type="match status" value="1"/>
</dbReference>
<dbReference type="PANTHER" id="PTHR11432:SF3">
    <property type="entry name" value="NADH-UBIQUINONE OXIDOREDUCTASE CHAIN 1"/>
    <property type="match status" value="1"/>
</dbReference>
<dbReference type="Pfam" id="PF00146">
    <property type="entry name" value="NADHdh"/>
    <property type="match status" value="1"/>
</dbReference>
<dbReference type="PROSITE" id="PS00667">
    <property type="entry name" value="COMPLEX1_ND1_1"/>
    <property type="match status" value="1"/>
</dbReference>
<dbReference type="PROSITE" id="PS00668">
    <property type="entry name" value="COMPLEX1_ND1_2"/>
    <property type="match status" value="1"/>
</dbReference>
<name>NUOH_RICPR</name>
<sequence length="339" mass="37805">MIEYFCEYMFPLTVIALKVVAITIPLILCVAYLTYAERRVIGLMQLRRGPNVVGPFGLLQPIADAVKLLFKEPIIPTDADKILFILAPIITFVLSLIGWAVIPFSSGVVLADINVGVLYILAISSLSVYGIIIAGWASNSKYAFLGAIRSSAQMISYEVSMGLVIITVLLTTGTLNLSGIIEAQKTLPWWIDLMLLPMSIVFFISVLAETNRLPFDLPEAESELVAGYNVEYSSMGFALFFLGEYANMILVSAMTTTLFLGGYLPPFNLSFLDCIPGFFWFVFKVGFLLFCFLWIRATLPRYRYDQLMRLGWKVFLPFTLFGVVLVSSVLFYTDNLPSV</sequence>
<evidence type="ECO:0000255" key="1">
    <source>
        <dbReference type="HAMAP-Rule" id="MF_01350"/>
    </source>
</evidence>
<organism>
    <name type="scientific">Rickettsia prowazekii (strain Madrid E)</name>
    <dbReference type="NCBI Taxonomy" id="272947"/>
    <lineage>
        <taxon>Bacteria</taxon>
        <taxon>Pseudomonadati</taxon>
        <taxon>Pseudomonadota</taxon>
        <taxon>Alphaproteobacteria</taxon>
        <taxon>Rickettsiales</taxon>
        <taxon>Rickettsiaceae</taxon>
        <taxon>Rickettsieae</taxon>
        <taxon>Rickettsia</taxon>
        <taxon>typhus group</taxon>
    </lineage>
</organism>
<reference key="1">
    <citation type="journal article" date="1998" name="Nature">
        <title>The genome sequence of Rickettsia prowazekii and the origin of mitochondria.</title>
        <authorList>
            <person name="Andersson S.G.E."/>
            <person name="Zomorodipour A."/>
            <person name="Andersson J.O."/>
            <person name="Sicheritz-Ponten T."/>
            <person name="Alsmark U.C.M."/>
            <person name="Podowski R.M."/>
            <person name="Naeslund A.K."/>
            <person name="Eriksson A.-S."/>
            <person name="Winkler H.H."/>
            <person name="Kurland C.G."/>
        </authorList>
    </citation>
    <scope>NUCLEOTIDE SEQUENCE [LARGE SCALE GENOMIC DNA]</scope>
    <source>
        <strain>Madrid E</strain>
    </source>
</reference>
<gene>
    <name evidence="1" type="primary">nuoH</name>
    <name type="ordered locus">RP796</name>
</gene>
<comment type="function">
    <text evidence="1">NDH-1 shuttles electrons from NADH, via FMN and iron-sulfur (Fe-S) centers, to quinones in the respiratory chain. The immediate electron acceptor for the enzyme in this species is believed to be ubiquinone. Couples the redox reaction to proton translocation (for every two electrons transferred, four hydrogen ions are translocated across the cytoplasmic membrane), and thus conserves the redox energy in a proton gradient. This subunit may bind ubiquinone.</text>
</comment>
<comment type="catalytic activity">
    <reaction evidence="1">
        <text>a quinone + NADH + 5 H(+)(in) = a quinol + NAD(+) + 4 H(+)(out)</text>
        <dbReference type="Rhea" id="RHEA:57888"/>
        <dbReference type="ChEBI" id="CHEBI:15378"/>
        <dbReference type="ChEBI" id="CHEBI:24646"/>
        <dbReference type="ChEBI" id="CHEBI:57540"/>
        <dbReference type="ChEBI" id="CHEBI:57945"/>
        <dbReference type="ChEBI" id="CHEBI:132124"/>
    </reaction>
</comment>
<comment type="subunit">
    <text evidence="1">NDH-1 is composed of 14 different subunits. Subunits NuoA, H, J, K, L, M, N constitute the membrane sector of the complex.</text>
</comment>
<comment type="subcellular location">
    <subcellularLocation>
        <location evidence="1">Cell inner membrane</location>
        <topology evidence="1">Multi-pass membrane protein</topology>
    </subcellularLocation>
</comment>
<comment type="similarity">
    <text evidence="1">Belongs to the complex I subunit 1 family.</text>
</comment>